<sequence length="351" mass="37580">MTTPPPPSTTPLTYRDAGVDIDAGNALVERIKPLVKRTFRPEVMSGLGGFGALFNLAGKYKEPVLVSGTDGVGTKLKLAQQLNRHNTIGIDLVAMCVNDVLVQGAEPLFFLDYFATGKLDIDTATAVISGIALGCEQSGCALIGGETAEMPDMYPPGEYDLAGFCVAAVEKSQLLDGSQVREDDVLIGIASSGPHSNGYSLIRRIYERAGSPADLDIHGTRLIDTLMAPTALYVKPILKLLHTHSDAIHAMAHITGGGLTENIIRVIPPNLGLRIDANAWTQPPVFQWLQREGALADTEMWRTFNCGIGFVLVATPNQVAPLGQALDNQGLAHWQIGRVVTPVDNERVHIG</sequence>
<name>PUR5_XYLFT</name>
<dbReference type="EC" id="6.3.3.1" evidence="1"/>
<dbReference type="EMBL" id="AE009442">
    <property type="protein sequence ID" value="AAO29406.1"/>
    <property type="molecule type" value="Genomic_DNA"/>
</dbReference>
<dbReference type="RefSeq" id="WP_011098163.1">
    <property type="nucleotide sequence ID" value="NC_004556.1"/>
</dbReference>
<dbReference type="SMR" id="Q87B94"/>
<dbReference type="GeneID" id="93905391"/>
<dbReference type="KEGG" id="xft:PD_1564"/>
<dbReference type="HOGENOM" id="CLU_047116_0_0_6"/>
<dbReference type="UniPathway" id="UPA00074">
    <property type="reaction ID" value="UER00129"/>
</dbReference>
<dbReference type="Proteomes" id="UP000002516">
    <property type="component" value="Chromosome"/>
</dbReference>
<dbReference type="GO" id="GO:0005829">
    <property type="term" value="C:cytosol"/>
    <property type="evidence" value="ECO:0007669"/>
    <property type="project" value="TreeGrafter"/>
</dbReference>
<dbReference type="GO" id="GO:0005524">
    <property type="term" value="F:ATP binding"/>
    <property type="evidence" value="ECO:0007669"/>
    <property type="project" value="UniProtKB-KW"/>
</dbReference>
<dbReference type="GO" id="GO:0004637">
    <property type="term" value="F:phosphoribosylamine-glycine ligase activity"/>
    <property type="evidence" value="ECO:0007669"/>
    <property type="project" value="TreeGrafter"/>
</dbReference>
<dbReference type="GO" id="GO:0004641">
    <property type="term" value="F:phosphoribosylformylglycinamidine cyclo-ligase activity"/>
    <property type="evidence" value="ECO:0007669"/>
    <property type="project" value="UniProtKB-UniRule"/>
</dbReference>
<dbReference type="GO" id="GO:0006189">
    <property type="term" value="P:'de novo' IMP biosynthetic process"/>
    <property type="evidence" value="ECO:0007669"/>
    <property type="project" value="UniProtKB-UniRule"/>
</dbReference>
<dbReference type="GO" id="GO:0046084">
    <property type="term" value="P:adenine biosynthetic process"/>
    <property type="evidence" value="ECO:0007669"/>
    <property type="project" value="TreeGrafter"/>
</dbReference>
<dbReference type="CDD" id="cd02196">
    <property type="entry name" value="PurM"/>
    <property type="match status" value="1"/>
</dbReference>
<dbReference type="FunFam" id="3.30.1330.10:FF:000001">
    <property type="entry name" value="Phosphoribosylformylglycinamidine cyclo-ligase"/>
    <property type="match status" value="1"/>
</dbReference>
<dbReference type="FunFam" id="3.90.650.10:FF:000001">
    <property type="entry name" value="Phosphoribosylformylglycinamidine cyclo-ligase"/>
    <property type="match status" value="1"/>
</dbReference>
<dbReference type="Gene3D" id="3.90.650.10">
    <property type="entry name" value="PurM-like C-terminal domain"/>
    <property type="match status" value="1"/>
</dbReference>
<dbReference type="Gene3D" id="3.30.1330.10">
    <property type="entry name" value="PurM-like, N-terminal domain"/>
    <property type="match status" value="1"/>
</dbReference>
<dbReference type="HAMAP" id="MF_00741">
    <property type="entry name" value="AIRS"/>
    <property type="match status" value="1"/>
</dbReference>
<dbReference type="InterPro" id="IPR010918">
    <property type="entry name" value="PurM-like_C_dom"/>
</dbReference>
<dbReference type="InterPro" id="IPR036676">
    <property type="entry name" value="PurM-like_C_sf"/>
</dbReference>
<dbReference type="InterPro" id="IPR016188">
    <property type="entry name" value="PurM-like_N"/>
</dbReference>
<dbReference type="InterPro" id="IPR036921">
    <property type="entry name" value="PurM-like_N_sf"/>
</dbReference>
<dbReference type="InterPro" id="IPR004733">
    <property type="entry name" value="PurM_cligase"/>
</dbReference>
<dbReference type="NCBIfam" id="TIGR00878">
    <property type="entry name" value="purM"/>
    <property type="match status" value="1"/>
</dbReference>
<dbReference type="PANTHER" id="PTHR10520:SF12">
    <property type="entry name" value="TRIFUNCTIONAL PURINE BIOSYNTHETIC PROTEIN ADENOSINE-3"/>
    <property type="match status" value="1"/>
</dbReference>
<dbReference type="PANTHER" id="PTHR10520">
    <property type="entry name" value="TRIFUNCTIONAL PURINE BIOSYNTHETIC PROTEIN ADENOSINE-3-RELATED"/>
    <property type="match status" value="1"/>
</dbReference>
<dbReference type="Pfam" id="PF00586">
    <property type="entry name" value="AIRS"/>
    <property type="match status" value="1"/>
</dbReference>
<dbReference type="Pfam" id="PF02769">
    <property type="entry name" value="AIRS_C"/>
    <property type="match status" value="1"/>
</dbReference>
<dbReference type="SUPFAM" id="SSF56042">
    <property type="entry name" value="PurM C-terminal domain-like"/>
    <property type="match status" value="1"/>
</dbReference>
<dbReference type="SUPFAM" id="SSF55326">
    <property type="entry name" value="PurM N-terminal domain-like"/>
    <property type="match status" value="1"/>
</dbReference>
<keyword id="KW-0067">ATP-binding</keyword>
<keyword id="KW-0963">Cytoplasm</keyword>
<keyword id="KW-0436">Ligase</keyword>
<keyword id="KW-0547">Nucleotide-binding</keyword>
<keyword id="KW-0658">Purine biosynthesis</keyword>
<keyword id="KW-1185">Reference proteome</keyword>
<reference key="1">
    <citation type="journal article" date="2003" name="J. Bacteriol.">
        <title>Comparative analyses of the complete genome sequences of Pierce's disease and citrus variegated chlorosis strains of Xylella fastidiosa.</title>
        <authorList>
            <person name="Van Sluys M.A."/>
            <person name="de Oliveira M.C."/>
            <person name="Monteiro-Vitorello C.B."/>
            <person name="Miyaki C.Y."/>
            <person name="Furlan L.R."/>
            <person name="Camargo L.E.A."/>
            <person name="da Silva A.C.R."/>
            <person name="Moon D.H."/>
            <person name="Takita M.A."/>
            <person name="Lemos E.G.M."/>
            <person name="Machado M.A."/>
            <person name="Ferro M.I.T."/>
            <person name="da Silva F.R."/>
            <person name="Goldman M.H.S."/>
            <person name="Goldman G.H."/>
            <person name="Lemos M.V.F."/>
            <person name="El-Dorry H."/>
            <person name="Tsai S.M."/>
            <person name="Carrer H."/>
            <person name="Carraro D.M."/>
            <person name="de Oliveira R.C."/>
            <person name="Nunes L.R."/>
            <person name="Siqueira W.J."/>
            <person name="Coutinho L.L."/>
            <person name="Kimura E.T."/>
            <person name="Ferro E.S."/>
            <person name="Harakava R."/>
            <person name="Kuramae E.E."/>
            <person name="Marino C.L."/>
            <person name="Giglioti E."/>
            <person name="Abreu I.L."/>
            <person name="Alves L.M.C."/>
            <person name="do Amaral A.M."/>
            <person name="Baia G.S."/>
            <person name="Blanco S.R."/>
            <person name="Brito M.S."/>
            <person name="Cannavan F.S."/>
            <person name="Celestino A.V."/>
            <person name="da Cunha A.F."/>
            <person name="Fenille R.C."/>
            <person name="Ferro J.A."/>
            <person name="Formighieri E.F."/>
            <person name="Kishi L.T."/>
            <person name="Leoni S.G."/>
            <person name="Oliveira A.R."/>
            <person name="Rosa V.E. Jr."/>
            <person name="Sassaki F.T."/>
            <person name="Sena J.A.D."/>
            <person name="de Souza A.A."/>
            <person name="Truffi D."/>
            <person name="Tsukumo F."/>
            <person name="Yanai G.M."/>
            <person name="Zaros L.G."/>
            <person name="Civerolo E.L."/>
            <person name="Simpson A.J.G."/>
            <person name="Almeida N.F. Jr."/>
            <person name="Setubal J.C."/>
            <person name="Kitajima J.P."/>
        </authorList>
    </citation>
    <scope>NUCLEOTIDE SEQUENCE [LARGE SCALE GENOMIC DNA]</scope>
    <source>
        <strain>Temecula1 / ATCC 700964</strain>
    </source>
</reference>
<evidence type="ECO:0000255" key="1">
    <source>
        <dbReference type="HAMAP-Rule" id="MF_00741"/>
    </source>
</evidence>
<organism>
    <name type="scientific">Xylella fastidiosa (strain Temecula1 / ATCC 700964)</name>
    <dbReference type="NCBI Taxonomy" id="183190"/>
    <lineage>
        <taxon>Bacteria</taxon>
        <taxon>Pseudomonadati</taxon>
        <taxon>Pseudomonadota</taxon>
        <taxon>Gammaproteobacteria</taxon>
        <taxon>Lysobacterales</taxon>
        <taxon>Lysobacteraceae</taxon>
        <taxon>Xylella</taxon>
    </lineage>
</organism>
<feature type="chain" id="PRO_0000148277" description="Phosphoribosylformylglycinamidine cyclo-ligase">
    <location>
        <begin position="1"/>
        <end position="351"/>
    </location>
</feature>
<protein>
    <recommendedName>
        <fullName evidence="1">Phosphoribosylformylglycinamidine cyclo-ligase</fullName>
        <ecNumber evidence="1">6.3.3.1</ecNumber>
    </recommendedName>
    <alternativeName>
        <fullName evidence="1">AIR synthase</fullName>
    </alternativeName>
    <alternativeName>
        <fullName evidence="1">AIRS</fullName>
    </alternativeName>
    <alternativeName>
        <fullName evidence="1">Phosphoribosyl-aminoimidazole synthetase</fullName>
    </alternativeName>
</protein>
<gene>
    <name evidence="1" type="primary">purM</name>
    <name type="ordered locus">PD_1564</name>
</gene>
<proteinExistence type="inferred from homology"/>
<comment type="catalytic activity">
    <reaction evidence="1">
        <text>2-formamido-N(1)-(5-O-phospho-beta-D-ribosyl)acetamidine + ATP = 5-amino-1-(5-phospho-beta-D-ribosyl)imidazole + ADP + phosphate + H(+)</text>
        <dbReference type="Rhea" id="RHEA:23032"/>
        <dbReference type="ChEBI" id="CHEBI:15378"/>
        <dbReference type="ChEBI" id="CHEBI:30616"/>
        <dbReference type="ChEBI" id="CHEBI:43474"/>
        <dbReference type="ChEBI" id="CHEBI:137981"/>
        <dbReference type="ChEBI" id="CHEBI:147287"/>
        <dbReference type="ChEBI" id="CHEBI:456216"/>
        <dbReference type="EC" id="6.3.3.1"/>
    </reaction>
</comment>
<comment type="pathway">
    <text evidence="1">Purine metabolism; IMP biosynthesis via de novo pathway; 5-amino-1-(5-phospho-D-ribosyl)imidazole from N(2)-formyl-N(1)-(5-phospho-D-ribosyl)glycinamide: step 2/2.</text>
</comment>
<comment type="subcellular location">
    <subcellularLocation>
        <location evidence="1">Cytoplasm</location>
    </subcellularLocation>
</comment>
<comment type="similarity">
    <text evidence="1">Belongs to the AIR synthase family.</text>
</comment>
<accession>Q87B94</accession>